<name>KUP_ACIF2</name>
<accession>B7JBL0</accession>
<proteinExistence type="inferred from homology"/>
<comment type="function">
    <text evidence="1">Transport of potassium into the cell. Likely operates as a K(+):H(+) symporter.</text>
</comment>
<comment type="catalytic activity">
    <reaction evidence="1">
        <text>K(+)(in) + H(+)(in) = K(+)(out) + H(+)(out)</text>
        <dbReference type="Rhea" id="RHEA:28490"/>
        <dbReference type="ChEBI" id="CHEBI:15378"/>
        <dbReference type="ChEBI" id="CHEBI:29103"/>
    </reaction>
    <physiologicalReaction direction="right-to-left" evidence="1">
        <dbReference type="Rhea" id="RHEA:28492"/>
    </physiologicalReaction>
</comment>
<comment type="subcellular location">
    <subcellularLocation>
        <location evidence="1">Cell inner membrane</location>
        <topology evidence="1">Multi-pass membrane protein</topology>
    </subcellularLocation>
</comment>
<comment type="similarity">
    <text evidence="1">Belongs to the HAK/KUP transporter (TC 2.A.72) family.</text>
</comment>
<reference key="1">
    <citation type="journal article" date="2008" name="BMC Genomics">
        <title>Acidithiobacillus ferrooxidans metabolism: from genome sequence to industrial applications.</title>
        <authorList>
            <person name="Valdes J."/>
            <person name="Pedroso I."/>
            <person name="Quatrini R."/>
            <person name="Dodson R.J."/>
            <person name="Tettelin H."/>
            <person name="Blake R. II"/>
            <person name="Eisen J.A."/>
            <person name="Holmes D.S."/>
        </authorList>
    </citation>
    <scope>NUCLEOTIDE SEQUENCE [LARGE SCALE GENOMIC DNA]</scope>
    <source>
        <strain>ATCC 23270 / DSM 14882 / CIP 104768 / NCIMB 8455</strain>
    </source>
</reference>
<sequence length="644" mass="70429">MADQKKPLQGGATLPLMAMAALGVVFGDIGTSPLYTLSACLSAMSLQPTAVNLQGILSLIFWTLVLVVSVKYAWVIMRASNQGEGGAMALTALASHATGHSNRLRWWILSIGLLGAALFYGDGVITPAISVLSAIEGMEVASPAWKPLVIPLALGVIIGLFMVQRRGTAAISHLFGPSMLVWFLLLFGSGLTWIVADPQVLIALNPWYALQFFGIHGIGGLVILGAVVLAVTGAEALYADMGHFGARPIRMAWYFLVLPALALNYLGQGALLELDPSAIQNPFFMLFPAWATIPMVVISGIATVIASQSVISGAYSATRQALLLGYLPRQAIIHTSASERGQIYLPLLNWLLMVAVIVVILWFRSSNALSFAYGTAVTGTMLMTTILVFFVARHSWKWSLWKAGLFCGFFVLLDGVFFGANLLKFVEGGWFPLAIGLAVFTTMSTWRWGRGILASKLYPDTLSVEDFLSSVTPGDPIRVPGTAVYLTMREKAIPHALLHNLKHNKVLHERVVILTIKFEEEPRVLPANRVVVLDYGQGVRRLTARYGFMEHPDIPEILKSAENSDNLWNPLDTTYFVSRQRVIPTAKASLSLWREHLFAIMLRISANATDFFRLPPNLVMELGDVVEFSHKVPDAPKKEKTTQQ</sequence>
<evidence type="ECO:0000255" key="1">
    <source>
        <dbReference type="HAMAP-Rule" id="MF_01522"/>
    </source>
</evidence>
<protein>
    <recommendedName>
        <fullName evidence="1">Probable potassium transport system protein Kup</fullName>
    </recommendedName>
</protein>
<keyword id="KW-0997">Cell inner membrane</keyword>
<keyword id="KW-1003">Cell membrane</keyword>
<keyword id="KW-0406">Ion transport</keyword>
<keyword id="KW-0472">Membrane</keyword>
<keyword id="KW-0630">Potassium</keyword>
<keyword id="KW-0633">Potassium transport</keyword>
<keyword id="KW-1185">Reference proteome</keyword>
<keyword id="KW-0769">Symport</keyword>
<keyword id="KW-0812">Transmembrane</keyword>
<keyword id="KW-1133">Transmembrane helix</keyword>
<keyword id="KW-0813">Transport</keyword>
<dbReference type="EMBL" id="CP001219">
    <property type="protein sequence ID" value="ACK78640.1"/>
    <property type="molecule type" value="Genomic_DNA"/>
</dbReference>
<dbReference type="RefSeq" id="WP_012607219.1">
    <property type="nucleotide sequence ID" value="NC_011761.1"/>
</dbReference>
<dbReference type="STRING" id="243159.AFE_1753"/>
<dbReference type="PaxDb" id="243159-AFE_1753"/>
<dbReference type="GeneID" id="65280926"/>
<dbReference type="KEGG" id="afr:AFE_1753"/>
<dbReference type="eggNOG" id="COG3158">
    <property type="taxonomic scope" value="Bacteria"/>
</dbReference>
<dbReference type="HOGENOM" id="CLU_008142_4_2_6"/>
<dbReference type="Proteomes" id="UP000001362">
    <property type="component" value="Chromosome"/>
</dbReference>
<dbReference type="GO" id="GO:0005886">
    <property type="term" value="C:plasma membrane"/>
    <property type="evidence" value="ECO:0007669"/>
    <property type="project" value="UniProtKB-SubCell"/>
</dbReference>
<dbReference type="GO" id="GO:0015079">
    <property type="term" value="F:potassium ion transmembrane transporter activity"/>
    <property type="evidence" value="ECO:0007669"/>
    <property type="project" value="UniProtKB-UniRule"/>
</dbReference>
<dbReference type="GO" id="GO:0015293">
    <property type="term" value="F:symporter activity"/>
    <property type="evidence" value="ECO:0007669"/>
    <property type="project" value="UniProtKB-UniRule"/>
</dbReference>
<dbReference type="HAMAP" id="MF_01522">
    <property type="entry name" value="Kup"/>
    <property type="match status" value="1"/>
</dbReference>
<dbReference type="InterPro" id="IPR003855">
    <property type="entry name" value="K+_transporter"/>
</dbReference>
<dbReference type="InterPro" id="IPR053952">
    <property type="entry name" value="K_trans_C"/>
</dbReference>
<dbReference type="InterPro" id="IPR053951">
    <property type="entry name" value="K_trans_N"/>
</dbReference>
<dbReference type="InterPro" id="IPR023051">
    <property type="entry name" value="Kup"/>
</dbReference>
<dbReference type="PANTHER" id="PTHR30540:SF79">
    <property type="entry name" value="LOW AFFINITY POTASSIUM TRANSPORT SYSTEM PROTEIN KUP"/>
    <property type="match status" value="1"/>
</dbReference>
<dbReference type="PANTHER" id="PTHR30540">
    <property type="entry name" value="OSMOTIC STRESS POTASSIUM TRANSPORTER"/>
    <property type="match status" value="1"/>
</dbReference>
<dbReference type="Pfam" id="PF02705">
    <property type="entry name" value="K_trans"/>
    <property type="match status" value="1"/>
</dbReference>
<dbReference type="Pfam" id="PF22776">
    <property type="entry name" value="K_trans_C"/>
    <property type="match status" value="1"/>
</dbReference>
<organism>
    <name type="scientific">Acidithiobacillus ferrooxidans (strain ATCC 23270 / DSM 14882 / CIP 104768 / NCIMB 8455)</name>
    <name type="common">Ferrobacillus ferrooxidans (strain ATCC 23270)</name>
    <dbReference type="NCBI Taxonomy" id="243159"/>
    <lineage>
        <taxon>Bacteria</taxon>
        <taxon>Pseudomonadati</taxon>
        <taxon>Pseudomonadota</taxon>
        <taxon>Acidithiobacillia</taxon>
        <taxon>Acidithiobacillales</taxon>
        <taxon>Acidithiobacillaceae</taxon>
        <taxon>Acidithiobacillus</taxon>
    </lineage>
</organism>
<feature type="chain" id="PRO_1000190254" description="Probable potassium transport system protein Kup">
    <location>
        <begin position="1"/>
        <end position="644"/>
    </location>
</feature>
<feature type="transmembrane region" description="Helical" evidence="1">
    <location>
        <begin position="10"/>
        <end position="30"/>
    </location>
</feature>
<feature type="transmembrane region" description="Helical" evidence="1">
    <location>
        <begin position="56"/>
        <end position="76"/>
    </location>
</feature>
<feature type="transmembrane region" description="Helical" evidence="1">
    <location>
        <begin position="106"/>
        <end position="126"/>
    </location>
</feature>
<feature type="transmembrane region" description="Helical" evidence="1">
    <location>
        <begin position="143"/>
        <end position="163"/>
    </location>
</feature>
<feature type="transmembrane region" description="Helical" evidence="1">
    <location>
        <begin position="175"/>
        <end position="195"/>
    </location>
</feature>
<feature type="transmembrane region" description="Helical" evidence="1">
    <location>
        <begin position="212"/>
        <end position="232"/>
    </location>
</feature>
<feature type="transmembrane region" description="Helical" evidence="1">
    <location>
        <begin position="252"/>
        <end position="272"/>
    </location>
</feature>
<feature type="transmembrane region" description="Helical" evidence="1">
    <location>
        <begin position="282"/>
        <end position="302"/>
    </location>
</feature>
<feature type="transmembrane region" description="Helical" evidence="1">
    <location>
        <begin position="343"/>
        <end position="363"/>
    </location>
</feature>
<feature type="transmembrane region" description="Helical" evidence="1">
    <location>
        <begin position="371"/>
        <end position="391"/>
    </location>
</feature>
<feature type="transmembrane region" description="Helical" evidence="1">
    <location>
        <begin position="403"/>
        <end position="423"/>
    </location>
</feature>
<feature type="transmembrane region" description="Helical" evidence="1">
    <location>
        <begin position="425"/>
        <end position="445"/>
    </location>
</feature>
<gene>
    <name evidence="1" type="primary">kup</name>
    <name type="ordered locus">AFE_1753</name>
</gene>